<name>YBED_ECO81</name>
<dbReference type="EMBL" id="CU928162">
    <property type="protein sequence ID" value="CAR06835.1"/>
    <property type="molecule type" value="Genomic_DNA"/>
</dbReference>
<dbReference type="RefSeq" id="WP_000850550.1">
    <property type="nucleotide sequence ID" value="NC_011745.1"/>
</dbReference>
<dbReference type="SMR" id="B7MRR8"/>
<dbReference type="GeneID" id="93776851"/>
<dbReference type="KEGG" id="ecq:ECED1_0627"/>
<dbReference type="HOGENOM" id="CLU_161438_2_1_6"/>
<dbReference type="Proteomes" id="UP000000748">
    <property type="component" value="Chromosome"/>
</dbReference>
<dbReference type="GO" id="GO:0005829">
    <property type="term" value="C:cytosol"/>
    <property type="evidence" value="ECO:0007669"/>
    <property type="project" value="TreeGrafter"/>
</dbReference>
<dbReference type="FunFam" id="3.30.70.260:FF:000002">
    <property type="entry name" value="UPF0250 protein YbeD"/>
    <property type="match status" value="1"/>
</dbReference>
<dbReference type="Gene3D" id="3.30.70.260">
    <property type="match status" value="1"/>
</dbReference>
<dbReference type="HAMAP" id="MF_00659">
    <property type="entry name" value="UPF0250"/>
    <property type="match status" value="1"/>
</dbReference>
<dbReference type="InterPro" id="IPR007454">
    <property type="entry name" value="UPF0250_YbeD-like"/>
</dbReference>
<dbReference type="InterPro" id="IPR027471">
    <property type="entry name" value="YbeD-like_sf"/>
</dbReference>
<dbReference type="NCBIfam" id="NF003447">
    <property type="entry name" value="PRK04998.1"/>
    <property type="match status" value="1"/>
</dbReference>
<dbReference type="PANTHER" id="PTHR38036">
    <property type="entry name" value="UPF0250 PROTEIN YBED"/>
    <property type="match status" value="1"/>
</dbReference>
<dbReference type="PANTHER" id="PTHR38036:SF1">
    <property type="entry name" value="UPF0250 PROTEIN YBED"/>
    <property type="match status" value="1"/>
</dbReference>
<dbReference type="Pfam" id="PF04359">
    <property type="entry name" value="DUF493"/>
    <property type="match status" value="1"/>
</dbReference>
<dbReference type="SUPFAM" id="SSF117991">
    <property type="entry name" value="YbeD/HP0495-like"/>
    <property type="match status" value="1"/>
</dbReference>
<reference key="1">
    <citation type="journal article" date="2009" name="PLoS Genet.">
        <title>Organised genome dynamics in the Escherichia coli species results in highly diverse adaptive paths.</title>
        <authorList>
            <person name="Touchon M."/>
            <person name="Hoede C."/>
            <person name="Tenaillon O."/>
            <person name="Barbe V."/>
            <person name="Baeriswyl S."/>
            <person name="Bidet P."/>
            <person name="Bingen E."/>
            <person name="Bonacorsi S."/>
            <person name="Bouchier C."/>
            <person name="Bouvet O."/>
            <person name="Calteau A."/>
            <person name="Chiapello H."/>
            <person name="Clermont O."/>
            <person name="Cruveiller S."/>
            <person name="Danchin A."/>
            <person name="Diard M."/>
            <person name="Dossat C."/>
            <person name="Karoui M.E."/>
            <person name="Frapy E."/>
            <person name="Garry L."/>
            <person name="Ghigo J.M."/>
            <person name="Gilles A.M."/>
            <person name="Johnson J."/>
            <person name="Le Bouguenec C."/>
            <person name="Lescat M."/>
            <person name="Mangenot S."/>
            <person name="Martinez-Jehanne V."/>
            <person name="Matic I."/>
            <person name="Nassif X."/>
            <person name="Oztas S."/>
            <person name="Petit M.A."/>
            <person name="Pichon C."/>
            <person name="Rouy Z."/>
            <person name="Ruf C.S."/>
            <person name="Schneider D."/>
            <person name="Tourret J."/>
            <person name="Vacherie B."/>
            <person name="Vallenet D."/>
            <person name="Medigue C."/>
            <person name="Rocha E.P.C."/>
            <person name="Denamur E."/>
        </authorList>
    </citation>
    <scope>NUCLEOTIDE SEQUENCE [LARGE SCALE GENOMIC DNA]</scope>
    <source>
        <strain>ED1a</strain>
    </source>
</reference>
<evidence type="ECO:0000255" key="1">
    <source>
        <dbReference type="HAMAP-Rule" id="MF_00659"/>
    </source>
</evidence>
<comment type="similarity">
    <text evidence="1">Belongs to the UPF0250 family.</text>
</comment>
<organism>
    <name type="scientific">Escherichia coli O81 (strain ED1a)</name>
    <dbReference type="NCBI Taxonomy" id="585397"/>
    <lineage>
        <taxon>Bacteria</taxon>
        <taxon>Pseudomonadati</taxon>
        <taxon>Pseudomonadota</taxon>
        <taxon>Gammaproteobacteria</taxon>
        <taxon>Enterobacterales</taxon>
        <taxon>Enterobacteriaceae</taxon>
        <taxon>Escherichia</taxon>
    </lineage>
</organism>
<feature type="chain" id="PRO_1000200439" description="UPF0250 protein YbeD">
    <location>
        <begin position="1"/>
        <end position="87"/>
    </location>
</feature>
<accession>B7MRR8</accession>
<sequence length="87" mass="9827">MKTKLNELLEFPTPFTYKVMGQALPELVDQVVEVVQRHAPGDYTPTVKPSSKGNYHSVSITINATHIEQVETLYEELGKIDIVRMVL</sequence>
<gene>
    <name evidence="1" type="primary">ybeD</name>
    <name type="ordered locus">ECED1_0627</name>
</gene>
<proteinExistence type="inferred from homology"/>
<protein>
    <recommendedName>
        <fullName evidence="1">UPF0250 protein YbeD</fullName>
    </recommendedName>
</protein>